<organism>
    <name type="scientific">Drosophila erecta</name>
    <name type="common">Fruit fly</name>
    <dbReference type="NCBI Taxonomy" id="7220"/>
    <lineage>
        <taxon>Eukaryota</taxon>
        <taxon>Metazoa</taxon>
        <taxon>Ecdysozoa</taxon>
        <taxon>Arthropoda</taxon>
        <taxon>Hexapoda</taxon>
        <taxon>Insecta</taxon>
        <taxon>Pterygota</taxon>
        <taxon>Neoptera</taxon>
        <taxon>Endopterygota</taxon>
        <taxon>Diptera</taxon>
        <taxon>Brachycera</taxon>
        <taxon>Muscomorpha</taxon>
        <taxon>Ephydroidea</taxon>
        <taxon>Drosophilidae</taxon>
        <taxon>Drosophila</taxon>
        <taxon>Sophophora</taxon>
    </lineage>
</organism>
<proteinExistence type="inferred from homology"/>
<sequence>MSHANRKEITGLTRMTPKGLKELCKKDKLYQTPRLNDVLYLHYQGFQCIENLEEYTELKCLWLECNAISEIQGLEKLGKLKCLFLQNNLITKIENLDPCRELDTLNLSSNHIRKIQNIGTNILPVLNTLTIASNYLKDSDSLSDLIQCKTLSVLDLSNNRIDDILIVKIFEQMVSLKVLVLQGNPVVSRLPQYRKTLILACKELTYLDSRPVFPRDRACAEAWKRDGYEGERKENNRWKRAERRKTRESINCTIRMRNSHRPPDQQDPLLRSSDSEDDTCTETTRKKVALENDCVDDLWEEVSCEQPISDHGTSTSSSVEDKDGTSSQDDLIAEKLSNRGTLEGRPTVLYENEVSNIKSVNQNIKNFEPRSIETKVFQDVSKISPIIIEEKRVPNINLNNEPSDVKNRKVIKCEKTGYTSTGQVLKENVFDEDAEIKNVEDMVQCQDIIKSNEDMNSEFVVSTKLEKDVEQTCIALRNEAQCKELDEDQSIKEIESKLINEMYENVAADDHDKHNETVDLNLKKTASAQHARTFFFEENKMTRRFYQEDKKSSLLAKSKEEALLEEDCIISNEKCAYDLEEIGRQMEEDLAELRQSTQKLVGFSIDEDADSKTDSEIDEEDLMAQQDPYSPLLQQQFKDRRMKIMLKEETKAQGESIRDLNITLSNESSSDDKQDQLFAKLLDDATENIPKRIFGTGCDSLSSAWPQEECLLQLTLSEVKETPDQEIVFKNSITNSSSFEEANEICVRIDQKMAEEEAALGKLLHDLENEANTKVKHDETNSSKESDAARICTSLLDDIMVELTFNEKRWHEKPKSFKFGPIESDDEFSYSFEPQLEKLVPPALEDPARGKSLRECLDTFSDFVSSMADPKLPLMLGRNPTSGVEKIRAAQELLKSKNLAELYADTAESLNSQVAKEIEKRKRRVAASATRCFNQRDKYDDTLELVQNRLMIVKKDSGDLEELPPPPPLISDTESEDYDTAEDEYTPGNGGHKHTHGSKPQDSKEHLMNNLLKQKQDKPDTVEEVGKKNDHDEDEFYSLEAMTTFGNLDAEFFHKLDLQKVNDSEDSESAINCMRSYNELQAYMKSGSLKHQLNSEDTKMLQTMFSTVASDGKPKLRNPKGEEEDDLLKKMVLRMKEYEEREHQLQLVPHEIPRELSPIKLSLGGSKLFEQKNKIPETGLVHAENELTGNIQFIDNKKTNNDKSTDAIEKNCEPLVKTSCQTSNKSIDDDIQSDVSTDYESGEEVLVVEPPKLSDAVLKSLYSDGFEADLKMVHELEEATRRNLYRYHSNVMHNSTNNHSFSTKKTLPTKTSTSEQSVGAKAKWAKIAERLHEFLDPETILRKEQIGERDACEDSEDEDFAFEENNFEKDEKLIISEEYNSTQNICDGNSGPSKLDGSDQFASIKGFENITEMPTYNMELNSQSKKKTSEKLSNEIENIITTCSSFEAPTDSIGIEYFEDPTLTQINPEGLKTEQIECNLQILNEDGDVVVQELSVNAQVSFE</sequence>
<keyword id="KW-0966">Cell projection</keyword>
<keyword id="KW-0969">Cilium</keyword>
<keyword id="KW-0433">Leucine-rich repeat</keyword>
<keyword id="KW-0677">Repeat</keyword>
<dbReference type="EMBL" id="CH954179">
    <property type="protein sequence ID" value="EDV54437.1"/>
    <property type="molecule type" value="Genomic_DNA"/>
</dbReference>
<dbReference type="SMR" id="B3NLX1"/>
<dbReference type="EnsemblMetazoa" id="FBtr0141354">
    <property type="protein sequence ID" value="FBpp0139846"/>
    <property type="gene ID" value="FBgn0113479"/>
</dbReference>
<dbReference type="EnsemblMetazoa" id="XM_001974001.3">
    <property type="protein sequence ID" value="XP_001974037.1"/>
    <property type="gene ID" value="LOC6548898"/>
</dbReference>
<dbReference type="GeneID" id="6548898"/>
<dbReference type="KEGG" id="der:6548898"/>
<dbReference type="CTD" id="318856"/>
<dbReference type="eggNOG" id="ENOG502QQFE">
    <property type="taxonomic scope" value="Eukaryota"/>
</dbReference>
<dbReference type="HOGENOM" id="CLU_001523_0_0_1"/>
<dbReference type="OMA" id="WKREGYE"/>
<dbReference type="OrthoDB" id="1904536at2759"/>
<dbReference type="PhylomeDB" id="B3NLX1"/>
<dbReference type="ChiTaRS" id="Trxr-1">
    <property type="organism name" value="fly"/>
</dbReference>
<dbReference type="Proteomes" id="UP000008711">
    <property type="component" value="Unassembled WGS sequence"/>
</dbReference>
<dbReference type="GO" id="GO:0005930">
    <property type="term" value="C:axoneme"/>
    <property type="evidence" value="ECO:0000250"/>
    <property type="project" value="UniProtKB"/>
</dbReference>
<dbReference type="GO" id="GO:0045202">
    <property type="term" value="C:synapse"/>
    <property type="evidence" value="ECO:0007669"/>
    <property type="project" value="GOC"/>
</dbReference>
<dbReference type="GO" id="GO:0070840">
    <property type="term" value="F:dynein complex binding"/>
    <property type="evidence" value="ECO:0000250"/>
    <property type="project" value="UniProtKB"/>
</dbReference>
<dbReference type="GO" id="GO:0035082">
    <property type="term" value="P:axoneme assembly"/>
    <property type="evidence" value="ECO:0007669"/>
    <property type="project" value="TreeGrafter"/>
</dbReference>
<dbReference type="GO" id="GO:0007268">
    <property type="term" value="P:chemical synaptic transmission"/>
    <property type="evidence" value="ECO:0007669"/>
    <property type="project" value="EnsemblMetazoa"/>
</dbReference>
<dbReference type="GO" id="GO:0060271">
    <property type="term" value="P:cilium assembly"/>
    <property type="evidence" value="ECO:0000250"/>
    <property type="project" value="UniProtKB"/>
</dbReference>
<dbReference type="FunFam" id="3.80.10.10:FF:000166">
    <property type="entry name" value="Dynein assembly factor 1, axonemal"/>
    <property type="match status" value="1"/>
</dbReference>
<dbReference type="FunFam" id="3.80.10.10:FF:000331">
    <property type="entry name" value="Dynein assembly factor 1, axonemal homolog"/>
    <property type="match status" value="1"/>
</dbReference>
<dbReference type="Gene3D" id="3.80.10.10">
    <property type="entry name" value="Ribonuclease Inhibitor"/>
    <property type="match status" value="2"/>
</dbReference>
<dbReference type="InterPro" id="IPR050576">
    <property type="entry name" value="Cilia_flagella_integrity"/>
</dbReference>
<dbReference type="InterPro" id="IPR001611">
    <property type="entry name" value="Leu-rich_rpt"/>
</dbReference>
<dbReference type="InterPro" id="IPR025875">
    <property type="entry name" value="Leu-rich_rpt_4"/>
</dbReference>
<dbReference type="InterPro" id="IPR032675">
    <property type="entry name" value="LRR_dom_sf"/>
</dbReference>
<dbReference type="PANTHER" id="PTHR45973:SF9">
    <property type="entry name" value="LEUCINE-RICH REPEAT-CONTAINING PROTEIN 46"/>
    <property type="match status" value="1"/>
</dbReference>
<dbReference type="PANTHER" id="PTHR45973">
    <property type="entry name" value="PROTEIN PHOSPHATASE 1 REGULATORY SUBUNIT SDS22-RELATED"/>
    <property type="match status" value="1"/>
</dbReference>
<dbReference type="Pfam" id="PF12799">
    <property type="entry name" value="LRR_4"/>
    <property type="match status" value="1"/>
</dbReference>
<dbReference type="Pfam" id="PF14580">
    <property type="entry name" value="LRR_9"/>
    <property type="match status" value="1"/>
</dbReference>
<dbReference type="SMART" id="SM00365">
    <property type="entry name" value="LRR_SD22"/>
    <property type="match status" value="3"/>
</dbReference>
<dbReference type="SUPFAM" id="SSF52075">
    <property type="entry name" value="Outer arm dynein light chain 1"/>
    <property type="match status" value="1"/>
</dbReference>
<dbReference type="PROSITE" id="PS51450">
    <property type="entry name" value="LRR"/>
    <property type="match status" value="6"/>
</dbReference>
<protein>
    <recommendedName>
        <fullName>Dynein axonemal assembly factor 1 homolog</fullName>
    </recommendedName>
    <alternativeName>
        <fullName>Defective transmitter-recycling protein</fullName>
    </alternativeName>
    <alternativeName>
        <fullName>Leucine-rich repeat-containing protein 50 homolog</fullName>
    </alternativeName>
</protein>
<name>DAAF1_DROER</name>
<reference key="1">
    <citation type="journal article" date="2007" name="Nature">
        <title>Evolution of genes and genomes on the Drosophila phylogeny.</title>
        <authorList>
            <consortium name="Drosophila 12 genomes consortium"/>
        </authorList>
    </citation>
    <scope>NUCLEOTIDE SEQUENCE [LARGE SCALE GENOMIC DNA]</scope>
    <source>
        <strain>Tucson 14021-0224.01</strain>
    </source>
</reference>
<evidence type="ECO:0000250" key="1"/>
<evidence type="ECO:0000256" key="2">
    <source>
        <dbReference type="SAM" id="MobiDB-lite"/>
    </source>
</evidence>
<evidence type="ECO:0000305" key="3"/>
<accession>B3NLX1</accession>
<comment type="function">
    <text evidence="1">Cilium-specific protein required for cilia structures.</text>
</comment>
<comment type="subcellular location">
    <subcellularLocation>
        <location evidence="1">Cell projection</location>
        <location evidence="1">Cilium</location>
    </subcellularLocation>
</comment>
<comment type="similarity">
    <text evidence="3">Belongs to the DNAAF1 family.</text>
</comment>
<gene>
    <name type="primary">dtr</name>
    <name type="ORF">GG21300</name>
</gene>
<feature type="chain" id="PRO_0000363936" description="Dynein axonemal assembly factor 1 homolog">
    <location>
        <begin position="1"/>
        <end position="1503"/>
    </location>
</feature>
<feature type="repeat" description="LRR 1">
    <location>
        <begin position="34"/>
        <end position="56"/>
    </location>
</feature>
<feature type="repeat" description="LRR 2">
    <location>
        <begin position="57"/>
        <end position="78"/>
    </location>
</feature>
<feature type="repeat" description="LRR 3">
    <location>
        <begin position="79"/>
        <end position="100"/>
    </location>
</feature>
<feature type="repeat" description="LRR 4">
    <location>
        <begin position="101"/>
        <end position="122"/>
    </location>
</feature>
<feature type="repeat" description="LRR 5">
    <location>
        <begin position="125"/>
        <end position="146"/>
    </location>
</feature>
<feature type="repeat" description="LRR 6">
    <location>
        <begin position="150"/>
        <end position="171"/>
    </location>
</feature>
<feature type="domain" description="LRRCT">
    <location>
        <begin position="185"/>
        <end position="223"/>
    </location>
</feature>
<feature type="region of interest" description="Disordered" evidence="2">
    <location>
        <begin position="249"/>
        <end position="280"/>
    </location>
</feature>
<feature type="region of interest" description="Disordered" evidence="2">
    <location>
        <begin position="305"/>
        <end position="328"/>
    </location>
</feature>
<feature type="region of interest" description="Disordered" evidence="2">
    <location>
        <begin position="956"/>
        <end position="1033"/>
    </location>
</feature>
<feature type="region of interest" description="Disordered" evidence="2">
    <location>
        <begin position="1295"/>
        <end position="1315"/>
    </location>
</feature>
<feature type="compositionally biased region" description="Acidic residues" evidence="2">
    <location>
        <begin position="973"/>
        <end position="985"/>
    </location>
</feature>
<feature type="compositionally biased region" description="Basic and acidic residues" evidence="2">
    <location>
        <begin position="1014"/>
        <end position="1031"/>
    </location>
</feature>
<feature type="compositionally biased region" description="Low complexity" evidence="2">
    <location>
        <begin position="1303"/>
        <end position="1314"/>
    </location>
</feature>